<sequence>MSGTILENLSGRKLSILVATLLLCQVLCFLLGGLYAPLPAGHVTVLGSLCREDHARQNDTSFLLYSRGAGACIPVTREEVEQDSTKMANELVHVFQMPLPRDLRDLDYSRWQQNLIGVLQVEFGYDSSSELREPPRELQLTIDMRLAYRNKGDPDNGWKLYAHGVEHRYLDCVTSHVGPTETLYSCDMIPLFELGALHHSFYLLNLRFPLDTPSQMNLQFGHMHDLTLTAIHQNGGFTQIWLLLKTMLFPFVVGIMIWFWRRVHLLQRSPALLEYMLIYLGAALTFLNLPLEYLSLVYEMPYMLLLSDIRQGIFYAMLLTFWLVFAGEHMLIQDAPNKSTIRSRYWKHLSAVVVGCISLFVFDICERGVQLRNPFYSIWTTPLGAKVAMTFIVLAGVSAAIYFLFLCYMIWKVFRNIGDKRTSLPSMSQARRLHYEVPLDQKVEDWAGIVYFYTKAFFFQLHKANESKGLIYRFKFLMLATLVCAALTVAGFIMGQMAEGQWDWNDNVAIQPTSAFLTGVYGMWNIYIFALLILYAPSHKQWPTMHHSDETTQSNENIVASAASEEIEFSHLPSDSNPSEISSLTSFTRKVAFD</sequence>
<evidence type="ECO:0000250" key="1">
    <source>
        <dbReference type="UniProtKB" id="Q5T9L3"/>
    </source>
</evidence>
<evidence type="ECO:0000255" key="2"/>
<evidence type="ECO:0000256" key="3">
    <source>
        <dbReference type="SAM" id="MobiDB-lite"/>
    </source>
</evidence>
<evidence type="ECO:0000269" key="4">
    <source>
    </source>
</evidence>
<evidence type="ECO:0000269" key="5">
    <source>
    </source>
</evidence>
<evidence type="ECO:0000269" key="6">
    <source>
    </source>
</evidence>
<evidence type="ECO:0000269" key="7">
    <source>
    </source>
</evidence>
<evidence type="ECO:0000269" key="8">
    <source>
    </source>
</evidence>
<evidence type="ECO:0000269" key="9">
    <source>
    </source>
</evidence>
<evidence type="ECO:0000269" key="10">
    <source>
    </source>
</evidence>
<evidence type="ECO:0000269" key="11">
    <source>
    </source>
</evidence>
<evidence type="ECO:0000269" key="12">
    <source>
    </source>
</evidence>
<evidence type="ECO:0000303" key="13">
    <source>
    </source>
</evidence>
<evidence type="ECO:0000303" key="14">
    <source>
    </source>
</evidence>
<evidence type="ECO:0000303" key="15">
    <source>
    </source>
</evidence>
<evidence type="ECO:0000303" key="16">
    <source>
    </source>
</evidence>
<evidence type="ECO:0000303" key="17">
    <source>
    </source>
</evidence>
<evidence type="ECO:0000303" key="18">
    <source>
    </source>
</evidence>
<evidence type="ECO:0000303" key="19">
    <source>
    </source>
</evidence>
<evidence type="ECO:0000303" key="20">
    <source>
    </source>
</evidence>
<evidence type="ECO:0000305" key="21"/>
<evidence type="ECO:0000312" key="22">
    <source>
        <dbReference type="EMBL" id="AAF50085.2"/>
    </source>
</evidence>
<evidence type="ECO:0000312" key="23">
    <source>
        <dbReference type="EMBL" id="AAL28148.1"/>
    </source>
</evidence>
<evidence type="ECO:0000312" key="24">
    <source>
        <dbReference type="EMBL" id="ABD58936.1"/>
    </source>
</evidence>
<feature type="chain" id="PRO_0000390664" description="Protein wntless" evidence="2">
    <location>
        <begin position="1"/>
        <end position="594"/>
    </location>
</feature>
<feature type="topological domain" description="Cytoplasmic" evidence="1">
    <location>
        <begin position="1"/>
        <end position="13"/>
    </location>
</feature>
<feature type="transmembrane region" description="Helical; Name=1" evidence="2">
    <location>
        <begin position="14"/>
        <end position="34"/>
    </location>
</feature>
<feature type="topological domain" description="Lumenal" evidence="1">
    <location>
        <begin position="35"/>
        <end position="239"/>
    </location>
</feature>
<feature type="transmembrane region" description="Helical; Name=2" evidence="2">
    <location>
        <begin position="240"/>
        <end position="260"/>
    </location>
</feature>
<feature type="topological domain" description="Cytoplasmic" evidence="1">
    <location>
        <begin position="261"/>
        <end position="270"/>
    </location>
</feature>
<feature type="transmembrane region" description="Helical; Name=3" evidence="2">
    <location>
        <begin position="271"/>
        <end position="291"/>
    </location>
</feature>
<feature type="topological domain" description="Lumenal" evidence="1">
    <location>
        <begin position="292"/>
        <end position="311"/>
    </location>
</feature>
<feature type="transmembrane region" description="Helical; Name=4" evidence="2">
    <location>
        <begin position="312"/>
        <end position="332"/>
    </location>
</feature>
<feature type="topological domain" description="Cytoplasmic" evidence="1">
    <location>
        <begin position="333"/>
        <end position="344"/>
    </location>
</feature>
<feature type="transmembrane region" description="Helical; Name=5" evidence="2">
    <location>
        <begin position="345"/>
        <end position="365"/>
    </location>
</feature>
<feature type="topological domain" description="Lumenal" evidence="1">
    <location>
        <begin position="366"/>
        <end position="390"/>
    </location>
</feature>
<feature type="transmembrane region" description="Helical; Name=6" evidence="2">
    <location>
        <begin position="391"/>
        <end position="411"/>
    </location>
</feature>
<feature type="topological domain" description="Cytoplasmic" evidence="1">
    <location>
        <begin position="412"/>
        <end position="473"/>
    </location>
</feature>
<feature type="transmembrane region" description="Helical; Name=7" evidence="2">
    <location>
        <begin position="474"/>
        <end position="494"/>
    </location>
</feature>
<feature type="topological domain" description="Lumenal" evidence="1">
    <location>
        <begin position="495"/>
        <end position="514"/>
    </location>
</feature>
<feature type="transmembrane region" description="Helical; Name=8" evidence="2">
    <location>
        <begin position="515"/>
        <end position="535"/>
    </location>
</feature>
<feature type="topological domain" description="Cytoplasmic" evidence="1">
    <location>
        <begin position="536"/>
        <end position="594"/>
    </location>
</feature>
<feature type="region of interest" description="Disordered" evidence="3">
    <location>
        <begin position="571"/>
        <end position="594"/>
    </location>
</feature>
<feature type="compositionally biased region" description="Polar residues" evidence="3">
    <location>
        <begin position="573"/>
        <end position="588"/>
    </location>
</feature>
<feature type="glycosylation site" description="N-linked (GlcNAc...) asparagine" evidence="2">
    <location>
        <position position="58"/>
    </location>
</feature>
<feature type="splice variant" id="VSP_053188" description="In isoform B." evidence="13">
    <location>
        <begin position="437"/>
        <end position="468"/>
    </location>
</feature>
<feature type="mutagenesis site" description="In wls-2; Homozygous lethal." evidence="6">
    <original>P</original>
    <variation>S</variation>
    <location>
        <position position="250"/>
    </location>
</feature>
<proteinExistence type="evidence at protein level"/>
<keyword id="KW-0025">Alternative splicing</keyword>
<keyword id="KW-1003">Cell membrane</keyword>
<keyword id="KW-0966">Cell projection</keyword>
<keyword id="KW-0217">Developmental protein</keyword>
<keyword id="KW-0256">Endoplasmic reticulum</keyword>
<keyword id="KW-0967">Endosome</keyword>
<keyword id="KW-0325">Glycoprotein</keyword>
<keyword id="KW-0333">Golgi apparatus</keyword>
<keyword id="KW-0472">Membrane</keyword>
<keyword id="KW-0628">Postsynaptic cell membrane</keyword>
<keyword id="KW-1185">Reference proteome</keyword>
<keyword id="KW-0709">Segmentation polarity protein</keyword>
<keyword id="KW-0770">Synapse</keyword>
<keyword id="KW-0812">Transmembrane</keyword>
<keyword id="KW-1133">Transmembrane helix</keyword>
<keyword id="KW-0879">Wnt signaling pathway</keyword>
<dbReference type="EMBL" id="DQ305404">
    <property type="protein sequence ID" value="ABD58936.1"/>
    <property type="molecule type" value="mRNA"/>
</dbReference>
<dbReference type="EMBL" id="AE014296">
    <property type="protein sequence ID" value="AAF50085.2"/>
    <property type="molecule type" value="Genomic_DNA"/>
</dbReference>
<dbReference type="EMBL" id="AE014296">
    <property type="protein sequence ID" value="AAN11905.1"/>
    <property type="molecule type" value="Genomic_DNA"/>
</dbReference>
<dbReference type="EMBL" id="AY060600">
    <property type="protein sequence ID" value="AAL28148.1"/>
    <property type="molecule type" value="mRNA"/>
</dbReference>
<dbReference type="RefSeq" id="NP_648445.1">
    <molecule id="Q95ST2-1"/>
    <property type="nucleotide sequence ID" value="NM_140188.4"/>
</dbReference>
<dbReference type="RefSeq" id="NP_729681.1">
    <molecule id="Q95ST2-2"/>
    <property type="nucleotide sequence ID" value="NM_168450.3"/>
</dbReference>
<dbReference type="SMR" id="Q95ST2"/>
<dbReference type="BioGRID" id="64631">
    <property type="interactions" value="16"/>
</dbReference>
<dbReference type="FunCoup" id="Q95ST2">
    <property type="interactions" value="615"/>
</dbReference>
<dbReference type="IntAct" id="Q95ST2">
    <property type="interactions" value="5"/>
</dbReference>
<dbReference type="STRING" id="7227.FBpp0075947"/>
<dbReference type="TCDB" id="8.A.56.1.1">
    <property type="family name" value="the wntless protein (wls) family"/>
</dbReference>
<dbReference type="GlyCosmos" id="Q95ST2">
    <property type="glycosylation" value="1 site, No reported glycans"/>
</dbReference>
<dbReference type="GlyGen" id="Q95ST2">
    <property type="glycosylation" value="3 sites"/>
</dbReference>
<dbReference type="PaxDb" id="7227-FBpp0075947"/>
<dbReference type="DNASU" id="39259"/>
<dbReference type="EnsemblMetazoa" id="FBtr0076218">
    <molecule id="Q95ST2-1"/>
    <property type="protein sequence ID" value="FBpp0075947"/>
    <property type="gene ID" value="FBgn0036141"/>
</dbReference>
<dbReference type="EnsemblMetazoa" id="FBtr0076219">
    <molecule id="Q95ST2-2"/>
    <property type="protein sequence ID" value="FBpp0075948"/>
    <property type="gene ID" value="FBgn0036141"/>
</dbReference>
<dbReference type="GeneID" id="39259"/>
<dbReference type="KEGG" id="dme:Dmel_CG6210"/>
<dbReference type="UCSC" id="CG6210-RA">
    <molecule id="Q95ST2-1"/>
    <property type="organism name" value="d. melanogaster"/>
</dbReference>
<dbReference type="UCSC" id="CG6210-RB">
    <property type="organism name" value="d. melanogaster"/>
</dbReference>
<dbReference type="AGR" id="FB:FBgn0036141"/>
<dbReference type="CTD" id="79971"/>
<dbReference type="FlyBase" id="FBgn0036141">
    <property type="gene designation" value="wls"/>
</dbReference>
<dbReference type="VEuPathDB" id="VectorBase:FBgn0036141"/>
<dbReference type="eggNOG" id="ENOG502QSE2">
    <property type="taxonomic scope" value="Eukaryota"/>
</dbReference>
<dbReference type="GeneTree" id="ENSGT00390000005897"/>
<dbReference type="InParanoid" id="Q95ST2"/>
<dbReference type="OMA" id="GQWKWDE"/>
<dbReference type="OrthoDB" id="5804250at2759"/>
<dbReference type="PhylomeDB" id="Q95ST2"/>
<dbReference type="Reactome" id="R-DME-3238698">
    <property type="pathway name" value="WNT ligand biogenesis and trafficking"/>
</dbReference>
<dbReference type="SignaLink" id="Q95ST2"/>
<dbReference type="BioGRID-ORCS" id="39259">
    <property type="hits" value="0 hits in 1 CRISPR screen"/>
</dbReference>
<dbReference type="GenomeRNAi" id="39259"/>
<dbReference type="PRO" id="PR:Q95ST2"/>
<dbReference type="Proteomes" id="UP000000803">
    <property type="component" value="Chromosome 3L"/>
</dbReference>
<dbReference type="Bgee" id="FBgn0036141">
    <property type="expression patterns" value="Expressed in wing disc and 94 other cell types or tissues"/>
</dbReference>
<dbReference type="GO" id="GO:0042995">
    <property type="term" value="C:cell projection"/>
    <property type="evidence" value="ECO:0007669"/>
    <property type="project" value="UniProtKB-KW"/>
</dbReference>
<dbReference type="GO" id="GO:0005769">
    <property type="term" value="C:early endosome"/>
    <property type="evidence" value="ECO:0000314"/>
    <property type="project" value="FlyBase"/>
</dbReference>
<dbReference type="GO" id="GO:0012505">
    <property type="term" value="C:endomembrane system"/>
    <property type="evidence" value="ECO:0007005"/>
    <property type="project" value="FlyBase"/>
</dbReference>
<dbReference type="GO" id="GO:0005789">
    <property type="term" value="C:endoplasmic reticulum membrane"/>
    <property type="evidence" value="ECO:0000314"/>
    <property type="project" value="UniProtKB"/>
</dbReference>
<dbReference type="GO" id="GO:0010008">
    <property type="term" value="C:endosome membrane"/>
    <property type="evidence" value="ECO:0000314"/>
    <property type="project" value="UniProtKB"/>
</dbReference>
<dbReference type="GO" id="GO:0070062">
    <property type="term" value="C:extracellular exosome"/>
    <property type="evidence" value="ECO:0000314"/>
    <property type="project" value="FlyBase"/>
</dbReference>
<dbReference type="GO" id="GO:0005794">
    <property type="term" value="C:Golgi apparatus"/>
    <property type="evidence" value="ECO:0000314"/>
    <property type="project" value="FlyBase"/>
</dbReference>
<dbReference type="GO" id="GO:0000139">
    <property type="term" value="C:Golgi membrane"/>
    <property type="evidence" value="ECO:0000314"/>
    <property type="project" value="UniProtKB"/>
</dbReference>
<dbReference type="GO" id="GO:0005771">
    <property type="term" value="C:multivesicular body"/>
    <property type="evidence" value="ECO:0000314"/>
    <property type="project" value="FlyBase"/>
</dbReference>
<dbReference type="GO" id="GO:0031594">
    <property type="term" value="C:neuromuscular junction"/>
    <property type="evidence" value="ECO:0000314"/>
    <property type="project" value="UniProtKB"/>
</dbReference>
<dbReference type="GO" id="GO:0031090">
    <property type="term" value="C:organelle membrane"/>
    <property type="evidence" value="ECO:0000318"/>
    <property type="project" value="GO_Central"/>
</dbReference>
<dbReference type="GO" id="GO:0005886">
    <property type="term" value="C:plasma membrane"/>
    <property type="evidence" value="ECO:0000314"/>
    <property type="project" value="UniProtKB"/>
</dbReference>
<dbReference type="GO" id="GO:0045211">
    <property type="term" value="C:postsynaptic membrane"/>
    <property type="evidence" value="ECO:0000314"/>
    <property type="project" value="UniProtKB"/>
</dbReference>
<dbReference type="GO" id="GO:0042734">
    <property type="term" value="C:presynaptic membrane"/>
    <property type="evidence" value="ECO:0000314"/>
    <property type="project" value="UniProtKB"/>
</dbReference>
<dbReference type="GO" id="GO:0030672">
    <property type="term" value="C:synaptic vesicle membrane"/>
    <property type="evidence" value="ECO:0000314"/>
    <property type="project" value="UniProtKB"/>
</dbReference>
<dbReference type="GO" id="GO:0017147">
    <property type="term" value="F:Wnt-protein binding"/>
    <property type="evidence" value="ECO:0000353"/>
    <property type="project" value="UniProtKB"/>
</dbReference>
<dbReference type="GO" id="GO:0001745">
    <property type="term" value="P:compound eye morphogenesis"/>
    <property type="evidence" value="ECO:0000315"/>
    <property type="project" value="FlyBase"/>
</dbReference>
<dbReference type="GO" id="GO:0035017">
    <property type="term" value="P:cuticle pattern formation"/>
    <property type="evidence" value="ECO:0000315"/>
    <property type="project" value="FlyBase"/>
</dbReference>
<dbReference type="GO" id="GO:0043001">
    <property type="term" value="P:Golgi to plasma membrane protein transport"/>
    <property type="evidence" value="ECO:0000315"/>
    <property type="project" value="FlyBase"/>
</dbReference>
<dbReference type="GO" id="GO:0007480">
    <property type="term" value="P:imaginal disc-derived leg morphogenesis"/>
    <property type="evidence" value="ECO:0000315"/>
    <property type="project" value="FlyBase"/>
</dbReference>
<dbReference type="GO" id="GO:0008587">
    <property type="term" value="P:imaginal disc-derived wing margin morphogenesis"/>
    <property type="evidence" value="ECO:0000315"/>
    <property type="project" value="UniProtKB"/>
</dbReference>
<dbReference type="GO" id="GO:0007476">
    <property type="term" value="P:imaginal disc-derived wing morphogenesis"/>
    <property type="evidence" value="ECO:0000315"/>
    <property type="project" value="FlyBase"/>
</dbReference>
<dbReference type="GO" id="GO:0006886">
    <property type="term" value="P:intracellular protein transport"/>
    <property type="evidence" value="ECO:0000318"/>
    <property type="project" value="GO_Central"/>
</dbReference>
<dbReference type="GO" id="GO:0050714">
    <property type="term" value="P:positive regulation of protein secretion"/>
    <property type="evidence" value="ECO:0000315"/>
    <property type="project" value="UniProtKB"/>
</dbReference>
<dbReference type="GO" id="GO:0061357">
    <property type="term" value="P:positive regulation of Wnt protein secretion"/>
    <property type="evidence" value="ECO:0000315"/>
    <property type="project" value="ParkinsonsUK-UCL"/>
</dbReference>
<dbReference type="GO" id="GO:0030177">
    <property type="term" value="P:positive regulation of Wnt signaling pathway"/>
    <property type="evidence" value="ECO:0000315"/>
    <property type="project" value="UniProtKB"/>
</dbReference>
<dbReference type="GO" id="GO:0033157">
    <property type="term" value="P:regulation of intracellular protein transport"/>
    <property type="evidence" value="ECO:0000315"/>
    <property type="project" value="UniProtKB"/>
</dbReference>
<dbReference type="GO" id="GO:0007367">
    <property type="term" value="P:segment polarity determination"/>
    <property type="evidence" value="ECO:0000315"/>
    <property type="project" value="UniProtKB"/>
</dbReference>
<dbReference type="GO" id="GO:0099537">
    <property type="term" value="P:trans-synaptic signaling"/>
    <property type="evidence" value="ECO:0000314"/>
    <property type="project" value="SynGO"/>
</dbReference>
<dbReference type="GO" id="GO:0099157">
    <property type="term" value="P:trans-synaptic signaling via exosome"/>
    <property type="evidence" value="ECO:0000314"/>
    <property type="project" value="SynGO"/>
</dbReference>
<dbReference type="GO" id="GO:0061355">
    <property type="term" value="P:Wnt protein secretion"/>
    <property type="evidence" value="ECO:0000315"/>
    <property type="project" value="FlyBase"/>
</dbReference>
<dbReference type="GO" id="GO:0016055">
    <property type="term" value="P:Wnt signaling pathway"/>
    <property type="evidence" value="ECO:0007669"/>
    <property type="project" value="UniProtKB-KW"/>
</dbReference>
<dbReference type="InterPro" id="IPR047843">
    <property type="entry name" value="WLS-like_TM"/>
</dbReference>
<dbReference type="InterPro" id="IPR053936">
    <property type="entry name" value="WLS_GOLD"/>
</dbReference>
<dbReference type="InterPro" id="IPR009551">
    <property type="entry name" value="Wntless"/>
</dbReference>
<dbReference type="PANTHER" id="PTHR13449">
    <property type="entry name" value="INTEGRAL MEMBRANE PROTEIN GPR177"/>
    <property type="match status" value="1"/>
</dbReference>
<dbReference type="PANTHER" id="PTHR13449:SF2">
    <property type="entry name" value="PROTEIN WNTLESS HOMOLOG"/>
    <property type="match status" value="1"/>
</dbReference>
<dbReference type="Pfam" id="PF06664">
    <property type="entry name" value="WLS-like_TM"/>
    <property type="match status" value="1"/>
</dbReference>
<dbReference type="Pfam" id="PF21883">
    <property type="entry name" value="WLS_GOLD"/>
    <property type="match status" value="1"/>
</dbReference>
<comment type="function">
    <text evidence="6 7 8 10 11 12">A segment polarity gene required for wingless (wg)-dependent patterning processes, acting in both wg-sending cells and wg-target cells. In non-neuronal cells wls directs wg secretion. The wls traffic loop encompasses the Golgi, the cell surface, an endocytic compartment and a retrograde route leading back to the Golgi, and involves clathrin-mediated endocytosis and the retromer complex (a conserved protein complex consisting of Vps35 and Vps26). In neuronal cells (the larval motorneuron NMJ), the wg signal moves across the synapse via the release of wls-containing exosome-like vesicles. Postsynaptic wls is required for the trafficking of fz2 through the fz2-interacting protein Grip.</text>
</comment>
<comment type="subunit">
    <text evidence="9 11">Interacts with wg; in the Golgi. Interacts with Vps35, a component of the retromer complex; wls stability is regulated by Vps35.</text>
</comment>
<comment type="subcellular location">
    <subcellularLocation>
        <location evidence="7 9 10 11 12">Presynaptic cell membrane</location>
        <topology evidence="7 9 10 11 12">Multi-pass membrane protein</topology>
    </subcellularLocation>
    <subcellularLocation>
        <location evidence="7 9 10 11 12">Postsynaptic cell membrane</location>
        <topology evidence="7 9 10 11 12">Multi-pass membrane protein</topology>
    </subcellularLocation>
    <subcellularLocation>
        <location evidence="7 9 10 11 12">Cell membrane</location>
        <topology evidence="7 9 10 11 12">Multi-pass membrane protein</topology>
    </subcellularLocation>
    <subcellularLocation>
        <location evidence="7 9 10 11 12">Endosome membrane</location>
        <topology evidence="7 9 10 11 12">Multi-pass membrane protein</topology>
    </subcellularLocation>
    <subcellularLocation>
        <location evidence="7 9 10 11 12">Endoplasmic reticulum membrane</location>
        <topology evidence="7 9 10 11 12">Multi-pass membrane protein</topology>
    </subcellularLocation>
    <subcellularLocation>
        <location evidence="7 9 10 11 12">Golgi apparatus membrane</location>
        <topology evidence="7 9 10 11 12">Multi-pass membrane protein</topology>
    </subcellularLocation>
    <text>In non-neuronal cells, wls binds to wg in the Golgi and accompanies it to the plasma membrane where the two proteins dissociate. Wg is secreted and wls is then internalized and returns to the Golgi apparatus in a retromer-dependent manner. Wls and wg colocalize in the Golgi apparatus in wg-producing cells, and reduced expression is seen in non-producing cells. Endoplasmic reticulum expression is unchanged in wg-producing versus non-producing cells. In neuronal cells, wls is localized both pre- and postsynaptically and is transferred trans-synaptically from the pre- to the postsynaptic compartment.</text>
</comment>
<comment type="alternative products">
    <event type="alternative splicing"/>
    <isoform>
        <id>Q95ST2-1</id>
        <name evidence="10">A</name>
        <sequence type="displayed"/>
    </isoform>
    <isoform>
        <id>Q95ST2-2</id>
        <name evidence="4">B</name>
        <sequence type="described" ref="VSP_053188"/>
    </isoform>
</comment>
<comment type="tissue specificity">
    <text evidence="7 10 12">Ubiquitously expressed in the wing imaginal disk, increased expression is observed in a stripe at the dorso-ventral boundary and other regions of the wing disk that express wg. Also expresses in the leg imaginal disk. During larval development, expression is seen in both motorneurons and muscle.</text>
</comment>
<comment type="developmental stage">
    <text evidence="6 8">Expressed both maternally and zygotically throughout development.</text>
</comment>
<comment type="disruption phenotype">
    <text evidence="6 7 8">Segment polarity phenotype (cuticles are smaller and lack the alternate naked regions) and wing margin defects (a reduced number of posterior wing-margin bristles and the even bristles distribution is interrupted). Heterozygotes die as pharate adults with appendage malformations, such as lack of arista and antennal segments, rudimentary legs and wing-to-notum transformations.</text>
</comment>
<comment type="similarity">
    <text evidence="2">Belongs to the wntless family.</text>
</comment>
<protein>
    <recommendedName>
        <fullName evidence="14 17 18 19">Protein wntless</fullName>
    </recommendedName>
    <alternativeName>
        <fullName evidence="15 20">Evenness interrupted</fullName>
    </alternativeName>
    <alternativeName>
        <fullName evidence="16">Sprinter</fullName>
    </alternativeName>
</protein>
<accession>Q95ST2</accession>
<accession>Q9VTG4</accession>
<gene>
    <name evidence="14 17 18 19" type="primary">wls</name>
    <name evidence="15 20" type="synonym">evi</name>
    <name evidence="16" type="synonym">srt</name>
    <name type="ORF">CG6210</name>
</gene>
<organism>
    <name type="scientific">Drosophila melanogaster</name>
    <name type="common">Fruit fly</name>
    <dbReference type="NCBI Taxonomy" id="7227"/>
    <lineage>
        <taxon>Eukaryota</taxon>
        <taxon>Metazoa</taxon>
        <taxon>Ecdysozoa</taxon>
        <taxon>Arthropoda</taxon>
        <taxon>Hexapoda</taxon>
        <taxon>Insecta</taxon>
        <taxon>Pterygota</taxon>
        <taxon>Neoptera</taxon>
        <taxon>Endopterygota</taxon>
        <taxon>Diptera</taxon>
        <taxon>Brachycera</taxon>
        <taxon>Muscomorpha</taxon>
        <taxon>Ephydroidea</taxon>
        <taxon>Drosophilidae</taxon>
        <taxon>Drosophila</taxon>
        <taxon>Sophophora</taxon>
    </lineage>
</organism>
<name>WLS_DROME</name>
<reference evidence="21 24" key="1">
    <citation type="journal article" date="2006" name="Cell">
        <title>Wntless, a conserved membrane protein dedicated to the secretion of Wnt proteins from signaling cells.</title>
        <authorList>
            <person name="Baenziger C."/>
            <person name="Soldini D."/>
            <person name="Schuett C."/>
            <person name="Zipperlen P."/>
            <person name="Hausmann G."/>
            <person name="Basler K."/>
        </authorList>
    </citation>
    <scope>NUCLEOTIDE SEQUENCE [MRNA] (ISOFORM A)</scope>
    <scope>FUNCTION</scope>
    <scope>DEVELOPMENTAL STAGE</scope>
    <scope>DISRUPTION PHENOTYPE</scope>
    <scope>MUTAGENESIS OF PRO-250</scope>
</reference>
<reference evidence="22" key="2">
    <citation type="journal article" date="2000" name="Science">
        <title>The genome sequence of Drosophila melanogaster.</title>
        <authorList>
            <person name="Adams M.D."/>
            <person name="Celniker S.E."/>
            <person name="Holt R.A."/>
            <person name="Evans C.A."/>
            <person name="Gocayne J.D."/>
            <person name="Amanatides P.G."/>
            <person name="Scherer S.E."/>
            <person name="Li P.W."/>
            <person name="Hoskins R.A."/>
            <person name="Galle R.F."/>
            <person name="George R.A."/>
            <person name="Lewis S.E."/>
            <person name="Richards S."/>
            <person name="Ashburner M."/>
            <person name="Henderson S.N."/>
            <person name="Sutton G.G."/>
            <person name="Wortman J.R."/>
            <person name="Yandell M.D."/>
            <person name="Zhang Q."/>
            <person name="Chen L.X."/>
            <person name="Brandon R.C."/>
            <person name="Rogers Y.-H.C."/>
            <person name="Blazej R.G."/>
            <person name="Champe M."/>
            <person name="Pfeiffer B.D."/>
            <person name="Wan K.H."/>
            <person name="Doyle C."/>
            <person name="Baxter E.G."/>
            <person name="Helt G."/>
            <person name="Nelson C.R."/>
            <person name="Miklos G.L.G."/>
            <person name="Abril J.F."/>
            <person name="Agbayani A."/>
            <person name="An H.-J."/>
            <person name="Andrews-Pfannkoch C."/>
            <person name="Baldwin D."/>
            <person name="Ballew R.M."/>
            <person name="Basu A."/>
            <person name="Baxendale J."/>
            <person name="Bayraktaroglu L."/>
            <person name="Beasley E.M."/>
            <person name="Beeson K.Y."/>
            <person name="Benos P.V."/>
            <person name="Berman B.P."/>
            <person name="Bhandari D."/>
            <person name="Bolshakov S."/>
            <person name="Borkova D."/>
            <person name="Botchan M.R."/>
            <person name="Bouck J."/>
            <person name="Brokstein P."/>
            <person name="Brottier P."/>
            <person name="Burtis K.C."/>
            <person name="Busam D.A."/>
            <person name="Butler H."/>
            <person name="Cadieu E."/>
            <person name="Center A."/>
            <person name="Chandra I."/>
            <person name="Cherry J.M."/>
            <person name="Cawley S."/>
            <person name="Dahlke C."/>
            <person name="Davenport L.B."/>
            <person name="Davies P."/>
            <person name="de Pablos B."/>
            <person name="Delcher A."/>
            <person name="Deng Z."/>
            <person name="Mays A.D."/>
            <person name="Dew I."/>
            <person name="Dietz S.M."/>
            <person name="Dodson K."/>
            <person name="Doup L.E."/>
            <person name="Downes M."/>
            <person name="Dugan-Rocha S."/>
            <person name="Dunkov B.C."/>
            <person name="Dunn P."/>
            <person name="Durbin K.J."/>
            <person name="Evangelista C.C."/>
            <person name="Ferraz C."/>
            <person name="Ferriera S."/>
            <person name="Fleischmann W."/>
            <person name="Fosler C."/>
            <person name="Gabrielian A.E."/>
            <person name="Garg N.S."/>
            <person name="Gelbart W.M."/>
            <person name="Glasser K."/>
            <person name="Glodek A."/>
            <person name="Gong F."/>
            <person name="Gorrell J.H."/>
            <person name="Gu Z."/>
            <person name="Guan P."/>
            <person name="Harris M."/>
            <person name="Harris N.L."/>
            <person name="Harvey D.A."/>
            <person name="Heiman T.J."/>
            <person name="Hernandez J.R."/>
            <person name="Houck J."/>
            <person name="Hostin D."/>
            <person name="Houston K.A."/>
            <person name="Howland T.J."/>
            <person name="Wei M.-H."/>
            <person name="Ibegwam C."/>
            <person name="Jalali M."/>
            <person name="Kalush F."/>
            <person name="Karpen G.H."/>
            <person name="Ke Z."/>
            <person name="Kennison J.A."/>
            <person name="Ketchum K.A."/>
            <person name="Kimmel B.E."/>
            <person name="Kodira C.D."/>
            <person name="Kraft C.L."/>
            <person name="Kravitz S."/>
            <person name="Kulp D."/>
            <person name="Lai Z."/>
            <person name="Lasko P."/>
            <person name="Lei Y."/>
            <person name="Levitsky A.A."/>
            <person name="Li J.H."/>
            <person name="Li Z."/>
            <person name="Liang Y."/>
            <person name="Lin X."/>
            <person name="Liu X."/>
            <person name="Mattei B."/>
            <person name="McIntosh T.C."/>
            <person name="McLeod M.P."/>
            <person name="McPherson D."/>
            <person name="Merkulov G."/>
            <person name="Milshina N.V."/>
            <person name="Mobarry C."/>
            <person name="Morris J."/>
            <person name="Moshrefi A."/>
            <person name="Mount S.M."/>
            <person name="Moy M."/>
            <person name="Murphy B."/>
            <person name="Murphy L."/>
            <person name="Muzny D.M."/>
            <person name="Nelson D.L."/>
            <person name="Nelson D.R."/>
            <person name="Nelson K.A."/>
            <person name="Nixon K."/>
            <person name="Nusskern D.R."/>
            <person name="Pacleb J.M."/>
            <person name="Palazzolo M."/>
            <person name="Pittman G.S."/>
            <person name="Pan S."/>
            <person name="Pollard J."/>
            <person name="Puri V."/>
            <person name="Reese M.G."/>
            <person name="Reinert K."/>
            <person name="Remington K."/>
            <person name="Saunders R.D.C."/>
            <person name="Scheeler F."/>
            <person name="Shen H."/>
            <person name="Shue B.C."/>
            <person name="Siden-Kiamos I."/>
            <person name="Simpson M."/>
            <person name="Skupski M.P."/>
            <person name="Smith T.J."/>
            <person name="Spier E."/>
            <person name="Spradling A.C."/>
            <person name="Stapleton M."/>
            <person name="Strong R."/>
            <person name="Sun E."/>
            <person name="Svirskas R."/>
            <person name="Tector C."/>
            <person name="Turner R."/>
            <person name="Venter E."/>
            <person name="Wang A.H."/>
            <person name="Wang X."/>
            <person name="Wang Z.-Y."/>
            <person name="Wassarman D.A."/>
            <person name="Weinstock G.M."/>
            <person name="Weissenbach J."/>
            <person name="Williams S.M."/>
            <person name="Woodage T."/>
            <person name="Worley K.C."/>
            <person name="Wu D."/>
            <person name="Yang S."/>
            <person name="Yao Q.A."/>
            <person name="Ye J."/>
            <person name="Yeh R.-F."/>
            <person name="Zaveri J.S."/>
            <person name="Zhan M."/>
            <person name="Zhang G."/>
            <person name="Zhao Q."/>
            <person name="Zheng L."/>
            <person name="Zheng X.H."/>
            <person name="Zhong F.N."/>
            <person name="Zhong W."/>
            <person name="Zhou X."/>
            <person name="Zhu S.C."/>
            <person name="Zhu X."/>
            <person name="Smith H.O."/>
            <person name="Gibbs R.A."/>
            <person name="Myers E.W."/>
            <person name="Rubin G.M."/>
            <person name="Venter J.C."/>
        </authorList>
    </citation>
    <scope>NUCLEOTIDE SEQUENCE [LARGE SCALE GENOMIC DNA]</scope>
    <source>
        <strain>Berkeley</strain>
    </source>
</reference>
<reference evidence="21 22" key="3">
    <citation type="journal article" date="2002" name="Genome Biol.">
        <title>Annotation of the Drosophila melanogaster euchromatic genome: a systematic review.</title>
        <authorList>
            <person name="Misra S."/>
            <person name="Crosby M.A."/>
            <person name="Mungall C.J."/>
            <person name="Matthews B.B."/>
            <person name="Campbell K.S."/>
            <person name="Hradecky P."/>
            <person name="Huang Y."/>
            <person name="Kaminker J.S."/>
            <person name="Millburn G.H."/>
            <person name="Prochnik S.E."/>
            <person name="Smith C.D."/>
            <person name="Tupy J.L."/>
            <person name="Whitfield E.J."/>
            <person name="Bayraktaroglu L."/>
            <person name="Berman B.P."/>
            <person name="Bettencourt B.R."/>
            <person name="Celniker S.E."/>
            <person name="de Grey A.D.N.J."/>
            <person name="Drysdale R.A."/>
            <person name="Harris N.L."/>
            <person name="Richter J."/>
            <person name="Russo S."/>
            <person name="Schroeder A.J."/>
            <person name="Shu S.Q."/>
            <person name="Stapleton M."/>
            <person name="Yamada C."/>
            <person name="Ashburner M."/>
            <person name="Gelbart W.M."/>
            <person name="Rubin G.M."/>
            <person name="Lewis S.E."/>
        </authorList>
    </citation>
    <scope>GENOME REANNOTATION</scope>
    <scope>ALTERNATIVE SPLICING</scope>
    <source>
        <strain>Berkeley</strain>
    </source>
</reference>
<reference evidence="21 23" key="4">
    <citation type="journal article" date="2002" name="Genome Biol.">
        <title>A Drosophila full-length cDNA resource.</title>
        <authorList>
            <person name="Stapleton M."/>
            <person name="Carlson J.W."/>
            <person name="Brokstein P."/>
            <person name="Yu C."/>
            <person name="Champe M."/>
            <person name="George R.A."/>
            <person name="Guarin H."/>
            <person name="Kronmiller B."/>
            <person name="Pacleb J.M."/>
            <person name="Park S."/>
            <person name="Wan K.H."/>
            <person name="Rubin G.M."/>
            <person name="Celniker S.E."/>
        </authorList>
    </citation>
    <scope>NUCLEOTIDE SEQUENCE [LARGE SCALE MRNA] (ISOFORM A)</scope>
    <source>
        <strain evidence="23">Berkeley</strain>
        <tissue evidence="5">Head</tissue>
    </source>
</reference>
<reference evidence="21" key="5">
    <citation type="journal article" date="2006" name="Cell">
        <title>Secretion of Wnt ligands requires Evi, a conserved transmembrane protein.</title>
        <authorList>
            <person name="Bartscherer K."/>
            <person name="Pelte N."/>
            <person name="Ingelfinger D."/>
            <person name="Boutros M."/>
        </authorList>
    </citation>
    <scope>FUNCTION</scope>
    <scope>SUBCELLULAR LOCATION</scope>
    <scope>TISSUE SPECIFICITY</scope>
    <scope>DISRUPTION PHENOTYPE</scope>
</reference>
<reference evidence="21" key="6">
    <citation type="journal article" date="2006" name="Development">
        <title>Sprinter: a novel transmembrane protein required for Wg secretion and signaling.</title>
        <authorList>
            <person name="Goodman R.M."/>
            <person name="Thombre S."/>
            <person name="Firtina Z."/>
            <person name="Gray D."/>
            <person name="Betts D."/>
            <person name="Roebuck J."/>
            <person name="Spana E.P."/>
            <person name="Selva E.M."/>
        </authorList>
    </citation>
    <scope>FUNCTION</scope>
    <scope>DEVELOPMENTAL STAGE</scope>
    <scope>DISRUPTION PHENOTYPE</scope>
</reference>
<reference evidence="21" key="7">
    <citation type="journal article" date="2008" name="Dev. Cell">
        <title>The retromer complex influences Wnt secretion by recycling wntless from endosomes to the trans-Golgi network.</title>
        <authorList>
            <person name="Belenkaya T.Y."/>
            <person name="Wu Y."/>
            <person name="Tang X."/>
            <person name="Zhou B."/>
            <person name="Cheng L."/>
            <person name="Sharma Y.V."/>
            <person name="Yan D."/>
            <person name="Selva E.M."/>
            <person name="Lin X."/>
        </authorList>
    </citation>
    <scope>INTERACTION WITH VPS35</scope>
    <scope>SUBCELLULAR LOCATION</scope>
</reference>
<reference evidence="21" key="8">
    <citation type="journal article" date="2008" name="Nat. Cell Biol.">
        <title>Wingless secretion requires endosome-to-Golgi retrieval of Wntless/Evi/Sprinter by the retromer complex.</title>
        <authorList>
            <person name="Franch-Marro X."/>
            <person name="Wendler F."/>
            <person name="Guidato S."/>
            <person name="Griffith J."/>
            <person name="Baena-Lopez A."/>
            <person name="Itasaki N."/>
            <person name="Maurice M.M."/>
            <person name="Vincent J.P."/>
        </authorList>
    </citation>
    <scope>FUNCTION</scope>
    <scope>INTERACTION WITH WG</scope>
    <scope>SUBCELLULAR LOCATION</scope>
</reference>
<reference evidence="21" key="9">
    <citation type="journal article" date="2008" name="Nat. Cell Biol.">
        <title>Wingless secretion promotes and requires retromer-dependent cycling of Wntless.</title>
        <authorList>
            <person name="Port F."/>
            <person name="Kuster M."/>
            <person name="Herr P."/>
            <person name="Furger E."/>
            <person name="Banziger C."/>
            <person name="Hausmann G."/>
            <person name="Basler K."/>
        </authorList>
    </citation>
    <scope>FUNCTION</scope>
    <scope>SUBCELLULAR LOCATION</scope>
    <scope>TISSUE SPECIFICITY</scope>
</reference>
<reference evidence="21" key="10">
    <citation type="journal article" date="2009" name="Cell">
        <title>Trans-synaptic transmission of vesicular Wnt signals through Evi/Wntless.</title>
        <authorList>
            <person name="Korkut C."/>
            <person name="Ataman B."/>
            <person name="Ramachandran P."/>
            <person name="Ashley J."/>
            <person name="Barria R."/>
            <person name="Gherbesi N."/>
            <person name="Budnik V."/>
        </authorList>
    </citation>
    <scope>FUNCTION</scope>
    <scope>SUBCELLULAR LOCATION</scope>
    <scope>TISSUE SPECIFICITY</scope>
</reference>